<dbReference type="EMBL" id="AP008231">
    <property type="protein sequence ID" value="BAD78651.1"/>
    <property type="molecule type" value="Genomic_DNA"/>
</dbReference>
<dbReference type="RefSeq" id="WP_011242773.1">
    <property type="nucleotide sequence ID" value="NZ_CP085785.1"/>
</dbReference>
<dbReference type="SMR" id="Q5N4W8"/>
<dbReference type="GeneID" id="72429941"/>
<dbReference type="KEGG" id="syc:syc0461_c"/>
<dbReference type="eggNOG" id="COG3794">
    <property type="taxonomic scope" value="Bacteria"/>
</dbReference>
<dbReference type="Proteomes" id="UP000001175">
    <property type="component" value="Chromosome"/>
</dbReference>
<dbReference type="GO" id="GO:0031676">
    <property type="term" value="C:plasma membrane-derived thylakoid membrane"/>
    <property type="evidence" value="ECO:0007669"/>
    <property type="project" value="UniProtKB-SubCell"/>
</dbReference>
<dbReference type="GO" id="GO:0005507">
    <property type="term" value="F:copper ion binding"/>
    <property type="evidence" value="ECO:0007669"/>
    <property type="project" value="UniProtKB-UniRule"/>
</dbReference>
<dbReference type="GO" id="GO:0009055">
    <property type="term" value="F:electron transfer activity"/>
    <property type="evidence" value="ECO:0007669"/>
    <property type="project" value="UniProtKB-UniRule"/>
</dbReference>
<dbReference type="CDD" id="cd04219">
    <property type="entry name" value="Plastocyanin"/>
    <property type="match status" value="1"/>
</dbReference>
<dbReference type="Gene3D" id="2.60.40.420">
    <property type="entry name" value="Cupredoxins - blue copper proteins"/>
    <property type="match status" value="1"/>
</dbReference>
<dbReference type="HAMAP" id="MF_00566">
    <property type="entry name" value="Cytb6_f_plastocyanin"/>
    <property type="match status" value="1"/>
</dbReference>
<dbReference type="InterPro" id="IPR000923">
    <property type="entry name" value="BlueCu_1"/>
</dbReference>
<dbReference type="InterPro" id="IPR028871">
    <property type="entry name" value="BlueCu_1_BS"/>
</dbReference>
<dbReference type="InterPro" id="IPR001235">
    <property type="entry name" value="Copper_blue_Plastocyanin"/>
</dbReference>
<dbReference type="InterPro" id="IPR008972">
    <property type="entry name" value="Cupredoxin"/>
</dbReference>
<dbReference type="InterPro" id="IPR002387">
    <property type="entry name" value="Plastocyanin"/>
</dbReference>
<dbReference type="InterPro" id="IPR023511">
    <property type="entry name" value="Plastocyanin_cyanobac"/>
</dbReference>
<dbReference type="NCBIfam" id="TIGR02656">
    <property type="entry name" value="cyanin_plasto"/>
    <property type="match status" value="1"/>
</dbReference>
<dbReference type="PANTHER" id="PTHR34192">
    <property type="entry name" value="PLASTOCYANIN MAJOR ISOFORM, CHLOROPLASTIC-RELATED"/>
    <property type="match status" value="1"/>
</dbReference>
<dbReference type="PANTHER" id="PTHR34192:SF10">
    <property type="entry name" value="PLASTOCYANIN MAJOR ISOFORM, CHLOROPLASTIC-RELATED"/>
    <property type="match status" value="1"/>
</dbReference>
<dbReference type="Pfam" id="PF00127">
    <property type="entry name" value="Copper-bind"/>
    <property type="match status" value="1"/>
</dbReference>
<dbReference type="PRINTS" id="PR00156">
    <property type="entry name" value="COPPERBLUE"/>
</dbReference>
<dbReference type="PRINTS" id="PR00157">
    <property type="entry name" value="PLASTOCYANIN"/>
</dbReference>
<dbReference type="SUPFAM" id="SSF49503">
    <property type="entry name" value="Cupredoxins"/>
    <property type="match status" value="1"/>
</dbReference>
<dbReference type="PROSITE" id="PS00196">
    <property type="entry name" value="COPPER_BLUE"/>
    <property type="match status" value="1"/>
</dbReference>
<protein>
    <recommendedName>
        <fullName evidence="1">Plastocyanin</fullName>
    </recommendedName>
</protein>
<gene>
    <name evidence="1" type="primary">petE</name>
    <name type="ordered locus">syc0461_c</name>
</gene>
<sequence length="125" mass="13308">MKVLASFARRLSLFAVAAVLCVGSFFLSAAPASAQTVAIKMGADNGMLAFEPSTIEIQAGDTVQWVNNKLAPHNVVVEGQPELSHKDLAFSPGETFEATFSEPGTYTYYCEPHRGAGMVGKIVVQ</sequence>
<comment type="function">
    <text evidence="1">Participates in electron transfer between P700 and the cytochrome b6-f complex in photosystem I.</text>
</comment>
<comment type="cofactor">
    <cofactor evidence="1">
        <name>Cu(2+)</name>
        <dbReference type="ChEBI" id="CHEBI:29036"/>
    </cofactor>
</comment>
<comment type="subcellular location">
    <subcellularLocation>
        <location evidence="1">Cellular thylakoid membrane</location>
        <topology evidence="1">Peripheral membrane protein</topology>
        <orientation evidence="1">Lumenal side</orientation>
    </subcellularLocation>
    <text>Loosely bound to the thylakoid inner membrane surface.</text>
</comment>
<comment type="similarity">
    <text evidence="1">Belongs to the plastocyanin family.</text>
</comment>
<evidence type="ECO:0000255" key="1">
    <source>
        <dbReference type="HAMAP-Rule" id="MF_00566"/>
    </source>
</evidence>
<proteinExistence type="inferred from homology"/>
<reference key="1">
    <citation type="journal article" date="2007" name="Photosyn. Res.">
        <title>Complete nucleotide sequence of the freshwater unicellular cyanobacterium Synechococcus elongatus PCC 6301 chromosome: gene content and organization.</title>
        <authorList>
            <person name="Sugita C."/>
            <person name="Ogata K."/>
            <person name="Shikata M."/>
            <person name="Jikuya H."/>
            <person name="Takano J."/>
            <person name="Furumichi M."/>
            <person name="Kanehisa M."/>
            <person name="Omata T."/>
            <person name="Sugiura M."/>
            <person name="Sugita M."/>
        </authorList>
    </citation>
    <scope>NUCLEOTIDE SEQUENCE [LARGE SCALE GENOMIC DNA]</scope>
    <source>
        <strain>ATCC 27144 / PCC 6301 / SAUG 1402/1</strain>
    </source>
</reference>
<accession>Q5N4W8</accession>
<organism>
    <name type="scientific">Synechococcus sp. (strain ATCC 27144 / PCC 6301 / SAUG 1402/1)</name>
    <name type="common">Anacystis nidulans</name>
    <dbReference type="NCBI Taxonomy" id="269084"/>
    <lineage>
        <taxon>Bacteria</taxon>
        <taxon>Bacillati</taxon>
        <taxon>Cyanobacteriota</taxon>
        <taxon>Cyanophyceae</taxon>
        <taxon>Synechococcales</taxon>
        <taxon>Synechococcaceae</taxon>
        <taxon>Synechococcus</taxon>
    </lineage>
</organism>
<name>PLAS_SYNP6</name>
<feature type="signal peptide" evidence="1">
    <location>
        <begin position="1"/>
        <end position="34"/>
    </location>
</feature>
<feature type="chain" id="PRO_1000024940" description="Plastocyanin">
    <location>
        <begin position="35"/>
        <end position="125"/>
    </location>
</feature>
<feature type="domain" description="Plastocyanin-like" evidence="1">
    <location>
        <begin position="35"/>
        <end position="125"/>
    </location>
</feature>
<feature type="binding site" evidence="1">
    <location>
        <position position="73"/>
    </location>
    <ligand>
        <name>Cu cation</name>
        <dbReference type="ChEBI" id="CHEBI:23378"/>
    </ligand>
</feature>
<feature type="binding site" evidence="1">
    <location>
        <position position="110"/>
    </location>
    <ligand>
        <name>Cu cation</name>
        <dbReference type="ChEBI" id="CHEBI:23378"/>
    </ligand>
</feature>
<feature type="binding site" evidence="1">
    <location>
        <position position="113"/>
    </location>
    <ligand>
        <name>Cu cation</name>
        <dbReference type="ChEBI" id="CHEBI:23378"/>
    </ligand>
</feature>
<feature type="binding site" evidence="1">
    <location>
        <position position="118"/>
    </location>
    <ligand>
        <name>Cu cation</name>
        <dbReference type="ChEBI" id="CHEBI:23378"/>
    </ligand>
</feature>
<keyword id="KW-0186">Copper</keyword>
<keyword id="KW-0249">Electron transport</keyword>
<keyword id="KW-0472">Membrane</keyword>
<keyword id="KW-0479">Metal-binding</keyword>
<keyword id="KW-0732">Signal</keyword>
<keyword id="KW-0793">Thylakoid</keyword>
<keyword id="KW-0813">Transport</keyword>